<proteinExistence type="uncertain"/>
<gene>
    <name type="primary">R1A-4</name>
    <name type="ORF">PGEC668E02.11</name>
</gene>
<reference key="1">
    <citation type="journal article" date="2005" name="Plant J.">
        <title>The R1 resistance gene cluster contains three groups of independently evolving, type I R1 homologues and shows substantial structural variation among haplotypes of Solanum demissum.</title>
        <authorList>
            <person name="Kuang H."/>
            <person name="Wei F."/>
            <person name="Marano M.R."/>
            <person name="Wirtz U."/>
            <person name="Wang X."/>
            <person name="Liu J."/>
            <person name="Shum W.P."/>
            <person name="Zaborsky J."/>
            <person name="Tallon L.J."/>
            <person name="Rensink W."/>
            <person name="Lobst S."/>
            <person name="Zhang P."/>
            <person name="Tornqvist C.-E."/>
            <person name="Tek A."/>
            <person name="Bamberg J."/>
            <person name="Helgeson J."/>
            <person name="Fry W."/>
            <person name="You F."/>
            <person name="Luo M.-C."/>
            <person name="Jiang J."/>
            <person name="Buell C.R."/>
            <person name="Baker B."/>
        </authorList>
    </citation>
    <scope>NUCLEOTIDE SEQUENCE [GENOMIC DNA]</scope>
</reference>
<sequence>MYFNNELSDQKVCLLRELKNLKYSDDARDRINFFLWELKFLDCFLHLKSFPFASECGMLHVSQKMIDIWKSHCSKTINGTILYYGKVPLNLFVNWKKVIWKTKQEFRAQYSFPKTPLAANKVIDDDDNTHSPKFVMEVIDVFVENLNVLMKINDPCSWFFVPGHMKEQIEQVLKELKLLRFFVCFVSNKCSIQPQYRCTTFYTHALIEASHIAMVVWLHLPIYGNVNQDLAPSEVSRLFSDFMEMKIKSIQPVISRNNIYIDVLQALKSTIPQAQKKHAAESSTVEIPTHSLTVGLSDQMANLQEMLCLLRDNLIHLPILDLEFHLQDMDSVIIDAGLLIYSLYDIKREKEDTVLDDMNRALGLDLPRNIEPIKVMVYLVMQKAIQCNLPKVHGLGYVDFLLKNLKDFQGRYSDSLAFLKNQLQVIQTEFESLQPFLKVVVEEPQNKLKTLNEDCAIQIIRKAHEVEYVVDACINKGIPHWCLERWLQDIIEEITCIKAKIQEKNTVDDTMKTVIARTSSKLARTPRMNEEIVGFKDVIENLRNQLLNGTKGQDVISIHGMPGLGKTTLANRLYSDRSVVSHFDICAQCCVSQVYSYKDLLLALLCDAIGEGSVRRELHANELADMLRKTLLPRRYLILVDDVWENSVWDDLRGCFPDANNRSRIILTTRHHEVAKYASVHSDPLHLRMFDEDESWKLLEKKVFGEQSCSPLLKKVGLRIAKMCGQLPLSIVLVAGILSEMEKEVECWEQVANDLGTHIRSNSRAIVDQSYHVLPCHLKSCFLYFGAFLGVREIRISRLIRLWISESFIKSCEGRRLEDIAEGYLENLIGRNLVMVTQRANSNGKVKACRLHDVLLNFCKERAAEENLLLWINRDQSTKAVYSHKQHAHLAFTKMDNLVEWSASSSLVGSVLIMRYNPYFARCPLYAVSHILLNFKFLKVLDLKHQVVIDFIPTELPYLRYLTADIGQNSIPSSISNLWNLETLILNRRSVVHKILLPSTVWDMVKLRFLFIPNFSPENKKALLKNSPNLDDLETLSYPYFARVKDAELMLRKTPNLRKLTCKVKCLEYLHQYHALNFPIRLEILKLYRSNAFKAIPFCISAPNLKYLKLSGFYLDSQYLSKTADHLKNLEVLKLYYVEFGDHREWKVSNGMFPQLKILKLEDVSLMKWIVADDAFPNLEQLVLRGCQDLMEIPSCFMDILSLQYIEVEDCNESVVKSAMNIQETQVEDYQNTNFKLVLIEVHY</sequence>
<feature type="chain" id="PRO_0000233961" description="Putative late blight resistance protein homolog R1A-4">
    <location>
        <begin position="1"/>
        <end position="1244"/>
    </location>
</feature>
<feature type="domain" description="NB-ARC">
    <location>
        <begin position="527"/>
        <end position="755"/>
    </location>
</feature>
<feature type="repeat" description="LRR 1">
    <location>
        <begin position="978"/>
        <end position="1004"/>
    </location>
</feature>
<feature type="repeat" description="LRR 2">
    <location>
        <begin position="1079"/>
        <end position="1103"/>
    </location>
</feature>
<feature type="repeat" description="LRR 3">
    <location>
        <begin position="1127"/>
        <end position="1150"/>
    </location>
</feature>
<feature type="repeat" description="LRR 4">
    <location>
        <begin position="1153"/>
        <end position="1178"/>
    </location>
</feature>
<feature type="repeat" description="LRR 5">
    <location>
        <begin position="1213"/>
        <end position="1237"/>
    </location>
</feature>
<feature type="coiled-coil region" evidence="2">
    <location>
        <begin position="411"/>
        <end position="434"/>
    </location>
</feature>
<feature type="coiled-coil region" evidence="2">
    <location>
        <begin position="526"/>
        <end position="548"/>
    </location>
</feature>
<feature type="binding site" evidence="2">
    <location>
        <begin position="560"/>
        <end position="567"/>
    </location>
    <ligand>
        <name>ATP</name>
        <dbReference type="ChEBI" id="CHEBI:30616"/>
    </ligand>
</feature>
<protein>
    <recommendedName>
        <fullName>Putative late blight resistance protein homolog R1A-4</fullName>
    </recommendedName>
</protein>
<keyword id="KW-0067">ATP-binding</keyword>
<keyword id="KW-0175">Coiled coil</keyword>
<keyword id="KW-0963">Cytoplasm</keyword>
<keyword id="KW-0381">Hypersensitive response</keyword>
<keyword id="KW-0433">Leucine-rich repeat</keyword>
<keyword id="KW-0472">Membrane</keyword>
<keyword id="KW-0547">Nucleotide-binding</keyword>
<keyword id="KW-0611">Plant defense</keyword>
<keyword id="KW-0677">Repeat</keyword>
<organism>
    <name type="scientific">Solanum demissum</name>
    <name type="common">Wild potato</name>
    <dbReference type="NCBI Taxonomy" id="50514"/>
    <lineage>
        <taxon>Eukaryota</taxon>
        <taxon>Viridiplantae</taxon>
        <taxon>Streptophyta</taxon>
        <taxon>Embryophyta</taxon>
        <taxon>Tracheophyta</taxon>
        <taxon>Spermatophyta</taxon>
        <taxon>Magnoliopsida</taxon>
        <taxon>eudicotyledons</taxon>
        <taxon>Gunneridae</taxon>
        <taxon>Pentapetalae</taxon>
        <taxon>asterids</taxon>
        <taxon>lamiids</taxon>
        <taxon>Solanales</taxon>
        <taxon>Solanaceae</taxon>
        <taxon>Solanoideae</taxon>
        <taxon>Solaneae</taxon>
        <taxon>Solanum</taxon>
    </lineage>
</organism>
<accession>Q6L439</accession>
<dbReference type="EMBL" id="AC144791">
    <property type="protein sequence ID" value="AAT39943.2"/>
    <property type="molecule type" value="Genomic_DNA"/>
</dbReference>
<dbReference type="SMR" id="Q6L439"/>
<dbReference type="GO" id="GO:0005737">
    <property type="term" value="C:cytoplasm"/>
    <property type="evidence" value="ECO:0007669"/>
    <property type="project" value="UniProtKB-SubCell"/>
</dbReference>
<dbReference type="GO" id="GO:0016020">
    <property type="term" value="C:membrane"/>
    <property type="evidence" value="ECO:0007669"/>
    <property type="project" value="UniProtKB-SubCell"/>
</dbReference>
<dbReference type="GO" id="GO:0043531">
    <property type="term" value="F:ADP binding"/>
    <property type="evidence" value="ECO:0007669"/>
    <property type="project" value="InterPro"/>
</dbReference>
<dbReference type="GO" id="GO:0005524">
    <property type="term" value="F:ATP binding"/>
    <property type="evidence" value="ECO:0007669"/>
    <property type="project" value="UniProtKB-KW"/>
</dbReference>
<dbReference type="GO" id="GO:0009626">
    <property type="term" value="P:plant-type hypersensitive response"/>
    <property type="evidence" value="ECO:0007669"/>
    <property type="project" value="UniProtKB-KW"/>
</dbReference>
<dbReference type="CDD" id="cd14798">
    <property type="entry name" value="RX-CC_like"/>
    <property type="match status" value="1"/>
</dbReference>
<dbReference type="FunFam" id="3.40.50.300:FF:001091">
    <property type="entry name" value="Probable disease resistance protein At1g61300"/>
    <property type="match status" value="1"/>
</dbReference>
<dbReference type="FunFam" id="1.10.10.10:FF:000322">
    <property type="entry name" value="Probable disease resistance protein At1g63360"/>
    <property type="match status" value="1"/>
</dbReference>
<dbReference type="Gene3D" id="1.10.8.430">
    <property type="entry name" value="Helical domain of apoptotic protease-activating factors"/>
    <property type="match status" value="1"/>
</dbReference>
<dbReference type="Gene3D" id="3.40.50.300">
    <property type="entry name" value="P-loop containing nucleotide triphosphate hydrolases"/>
    <property type="match status" value="1"/>
</dbReference>
<dbReference type="Gene3D" id="3.80.10.10">
    <property type="entry name" value="Ribonuclease Inhibitor"/>
    <property type="match status" value="1"/>
</dbReference>
<dbReference type="Gene3D" id="1.10.10.10">
    <property type="entry name" value="Winged helix-like DNA-binding domain superfamily/Winged helix DNA-binding domain"/>
    <property type="match status" value="1"/>
</dbReference>
<dbReference type="InterPro" id="IPR042197">
    <property type="entry name" value="Apaf_helical"/>
</dbReference>
<dbReference type="InterPro" id="IPR044974">
    <property type="entry name" value="Disease_R_plants"/>
</dbReference>
<dbReference type="InterPro" id="IPR032675">
    <property type="entry name" value="LRR_dom_sf"/>
</dbReference>
<dbReference type="InterPro" id="IPR002182">
    <property type="entry name" value="NB-ARC"/>
</dbReference>
<dbReference type="InterPro" id="IPR027417">
    <property type="entry name" value="P-loop_NTPase"/>
</dbReference>
<dbReference type="InterPro" id="IPR021929">
    <property type="entry name" value="R1A-like_N"/>
</dbReference>
<dbReference type="InterPro" id="IPR038005">
    <property type="entry name" value="RX-like_CC"/>
</dbReference>
<dbReference type="InterPro" id="IPR036388">
    <property type="entry name" value="WH-like_DNA-bd_sf"/>
</dbReference>
<dbReference type="PANTHER" id="PTHR23155:SF1152">
    <property type="entry name" value="AAA+ ATPASE DOMAIN-CONTAINING PROTEIN"/>
    <property type="match status" value="1"/>
</dbReference>
<dbReference type="PANTHER" id="PTHR23155">
    <property type="entry name" value="DISEASE RESISTANCE PROTEIN RP"/>
    <property type="match status" value="1"/>
</dbReference>
<dbReference type="Pfam" id="PF00931">
    <property type="entry name" value="NB-ARC"/>
    <property type="match status" value="1"/>
</dbReference>
<dbReference type="Pfam" id="PF12061">
    <property type="entry name" value="NB-LRR"/>
    <property type="match status" value="1"/>
</dbReference>
<dbReference type="Pfam" id="PF23559">
    <property type="entry name" value="WH_DRP"/>
    <property type="match status" value="1"/>
</dbReference>
<dbReference type="PRINTS" id="PR00364">
    <property type="entry name" value="DISEASERSIST"/>
</dbReference>
<dbReference type="SUPFAM" id="SSF52058">
    <property type="entry name" value="L domain-like"/>
    <property type="match status" value="1"/>
</dbReference>
<dbReference type="SUPFAM" id="SSF52540">
    <property type="entry name" value="P-loop containing nucleoside triphosphate hydrolases"/>
    <property type="match status" value="1"/>
</dbReference>
<comment type="function">
    <text>Confers resistance to late blight (Phytophthora infestans) races carrying the avirulence gene Avr1. Resistance proteins guard the plant against pathogens that contain an appropriate avirulence protein via an indirect interaction with this avirulence protein. That triggers a defense system including the hypersensitive response, which restricts the pathogen growth.</text>
</comment>
<comment type="subcellular location">
    <subcellularLocation>
        <location evidence="1">Cytoplasm</location>
    </subcellularLocation>
    <subcellularLocation>
        <location evidence="1">Membrane</location>
        <topology evidence="1">Peripheral membrane protein</topology>
    </subcellularLocation>
</comment>
<comment type="miscellaneous">
    <text>This protein is encoded by the haplotype A genome of the allohexaploid Solanum demissum.</text>
</comment>
<comment type="similarity">
    <text evidence="3">Belongs to the disease resistance NB-LRR family.</text>
</comment>
<comment type="caution">
    <text evidence="3">Could be the product of a pseudogene.</text>
</comment>
<name>R1A4_SOLDE</name>
<evidence type="ECO:0000250" key="1"/>
<evidence type="ECO:0000255" key="2"/>
<evidence type="ECO:0000305" key="3"/>